<name>HYPA_DEHM1</name>
<evidence type="ECO:0000255" key="1">
    <source>
        <dbReference type="HAMAP-Rule" id="MF_00213"/>
    </source>
</evidence>
<reference key="1">
    <citation type="journal article" date="2005" name="Science">
        <title>Genome sequence of the PCE-dechlorinating bacterium Dehalococcoides ethenogenes.</title>
        <authorList>
            <person name="Seshadri R."/>
            <person name="Adrian L."/>
            <person name="Fouts D.E."/>
            <person name="Eisen J.A."/>
            <person name="Phillippy A.M."/>
            <person name="Methe B.A."/>
            <person name="Ward N.L."/>
            <person name="Nelson W.C."/>
            <person name="DeBoy R.T."/>
            <person name="Khouri H.M."/>
            <person name="Kolonay J.F."/>
            <person name="Dodson R.J."/>
            <person name="Daugherty S.C."/>
            <person name="Brinkac L.M."/>
            <person name="Sullivan S.A."/>
            <person name="Madupu R."/>
            <person name="Nelson K.E."/>
            <person name="Kang K.H."/>
            <person name="Impraim M."/>
            <person name="Tran K."/>
            <person name="Robinson J.M."/>
            <person name="Forberger H.A."/>
            <person name="Fraser C.M."/>
            <person name="Zinder S.H."/>
            <person name="Heidelberg J.F."/>
        </authorList>
    </citation>
    <scope>NUCLEOTIDE SEQUENCE [LARGE SCALE GENOMIC DNA]</scope>
    <source>
        <strain>ATCC BAA-2266 / KCTC 15142 / 195</strain>
    </source>
</reference>
<accession>Q3Z6L1</accession>
<comment type="function">
    <text evidence="1">Involved in the maturation of [NiFe] hydrogenases. Required for nickel insertion into the metal center of the hydrogenase.</text>
</comment>
<comment type="similarity">
    <text evidence="1">Belongs to the HypA/HybF family.</text>
</comment>
<sequence>MHELSITEELLKTIVAKAEEAKARKISRINLVIGEYAGVVEDSVKMCFDILSQDTMAKGALLEFKRIPAEFRCRLCGHTFPSGQHALVCPKCQGWNAEVIAGNEFFIESIEVDDESQSS</sequence>
<protein>
    <recommendedName>
        <fullName evidence="1">Hydrogenase maturation factor HypA</fullName>
    </recommendedName>
</protein>
<proteinExistence type="inferred from homology"/>
<keyword id="KW-0479">Metal-binding</keyword>
<keyword id="KW-0533">Nickel</keyword>
<keyword id="KW-0862">Zinc</keyword>
<feature type="chain" id="PRO_1000023825" description="Hydrogenase maturation factor HypA">
    <location>
        <begin position="1"/>
        <end position="119"/>
    </location>
</feature>
<feature type="binding site" evidence="1">
    <location>
        <position position="2"/>
    </location>
    <ligand>
        <name>Ni(2+)</name>
        <dbReference type="ChEBI" id="CHEBI:49786"/>
    </ligand>
</feature>
<feature type="binding site" evidence="1">
    <location>
        <position position="73"/>
    </location>
    <ligand>
        <name>Zn(2+)</name>
        <dbReference type="ChEBI" id="CHEBI:29105"/>
    </ligand>
</feature>
<feature type="binding site" evidence="1">
    <location>
        <position position="76"/>
    </location>
    <ligand>
        <name>Zn(2+)</name>
        <dbReference type="ChEBI" id="CHEBI:29105"/>
    </ligand>
</feature>
<feature type="binding site" evidence="1">
    <location>
        <position position="89"/>
    </location>
    <ligand>
        <name>Zn(2+)</name>
        <dbReference type="ChEBI" id="CHEBI:29105"/>
    </ligand>
</feature>
<feature type="binding site" evidence="1">
    <location>
        <position position="92"/>
    </location>
    <ligand>
        <name>Zn(2+)</name>
        <dbReference type="ChEBI" id="CHEBI:29105"/>
    </ligand>
</feature>
<gene>
    <name evidence="1" type="primary">hypA</name>
    <name type="ordered locus">DET1430</name>
</gene>
<organism>
    <name type="scientific">Dehalococcoides mccartyi (strain ATCC BAA-2266 / KCTC 15142 / 195)</name>
    <name type="common">Dehalococcoides ethenogenes (strain 195)</name>
    <dbReference type="NCBI Taxonomy" id="243164"/>
    <lineage>
        <taxon>Bacteria</taxon>
        <taxon>Bacillati</taxon>
        <taxon>Chloroflexota</taxon>
        <taxon>Dehalococcoidia</taxon>
        <taxon>Dehalococcoidales</taxon>
        <taxon>Dehalococcoidaceae</taxon>
        <taxon>Dehalococcoides</taxon>
    </lineage>
</organism>
<dbReference type="EMBL" id="CP000027">
    <property type="protein sequence ID" value="AAW39283.1"/>
    <property type="molecule type" value="Genomic_DNA"/>
</dbReference>
<dbReference type="RefSeq" id="WP_010937115.1">
    <property type="nucleotide sequence ID" value="NC_002936.3"/>
</dbReference>
<dbReference type="SMR" id="Q3Z6L1"/>
<dbReference type="STRING" id="243164.DET1430"/>
<dbReference type="GeneID" id="3229241"/>
<dbReference type="KEGG" id="det:DET1430"/>
<dbReference type="eggNOG" id="COG0375">
    <property type="taxonomic scope" value="Bacteria"/>
</dbReference>
<dbReference type="HOGENOM" id="CLU_126929_4_0_0"/>
<dbReference type="InParanoid" id="Q3Z6L1"/>
<dbReference type="Proteomes" id="UP000008289">
    <property type="component" value="Chromosome"/>
</dbReference>
<dbReference type="GO" id="GO:0016151">
    <property type="term" value="F:nickel cation binding"/>
    <property type="evidence" value="ECO:0007669"/>
    <property type="project" value="UniProtKB-UniRule"/>
</dbReference>
<dbReference type="GO" id="GO:0008270">
    <property type="term" value="F:zinc ion binding"/>
    <property type="evidence" value="ECO:0007669"/>
    <property type="project" value="UniProtKB-UniRule"/>
</dbReference>
<dbReference type="GO" id="GO:0051604">
    <property type="term" value="P:protein maturation"/>
    <property type="evidence" value="ECO:0007669"/>
    <property type="project" value="InterPro"/>
</dbReference>
<dbReference type="GO" id="GO:0036211">
    <property type="term" value="P:protein modification process"/>
    <property type="evidence" value="ECO:0007669"/>
    <property type="project" value="UniProtKB-UniRule"/>
</dbReference>
<dbReference type="Gene3D" id="3.30.2320.80">
    <property type="match status" value="1"/>
</dbReference>
<dbReference type="HAMAP" id="MF_00213">
    <property type="entry name" value="HypA_HybF"/>
    <property type="match status" value="1"/>
</dbReference>
<dbReference type="InterPro" id="IPR020538">
    <property type="entry name" value="Hydgase_Ni_incorp_HypA/HybF_CS"/>
</dbReference>
<dbReference type="InterPro" id="IPR000688">
    <property type="entry name" value="HypA/HybF"/>
</dbReference>
<dbReference type="NCBIfam" id="TIGR00100">
    <property type="entry name" value="hypA"/>
    <property type="match status" value="1"/>
</dbReference>
<dbReference type="PANTHER" id="PTHR34535">
    <property type="entry name" value="HYDROGENASE MATURATION FACTOR HYPA"/>
    <property type="match status" value="1"/>
</dbReference>
<dbReference type="PANTHER" id="PTHR34535:SF3">
    <property type="entry name" value="HYDROGENASE MATURATION FACTOR HYPA"/>
    <property type="match status" value="1"/>
</dbReference>
<dbReference type="Pfam" id="PF01155">
    <property type="entry name" value="HypA"/>
    <property type="match status" value="1"/>
</dbReference>
<dbReference type="PIRSF" id="PIRSF004761">
    <property type="entry name" value="Hydrgn_mat_HypA"/>
    <property type="match status" value="1"/>
</dbReference>
<dbReference type="PROSITE" id="PS01249">
    <property type="entry name" value="HYPA"/>
    <property type="match status" value="1"/>
</dbReference>